<organism>
    <name type="scientific">Albinaria turrita</name>
    <name type="common">Door snail</name>
    <name type="synonym">Clausilia turrita</name>
    <dbReference type="NCBI Taxonomy" id="27820"/>
    <lineage>
        <taxon>Eukaryota</taxon>
        <taxon>Metazoa</taxon>
        <taxon>Spiralia</taxon>
        <taxon>Lophotrochozoa</taxon>
        <taxon>Mollusca</taxon>
        <taxon>Gastropoda</taxon>
        <taxon>Heterobranchia</taxon>
        <taxon>Euthyneura</taxon>
        <taxon>Panpulmonata</taxon>
        <taxon>Eupulmonata</taxon>
        <taxon>Stylommatophora</taxon>
        <taxon>Helicina</taxon>
        <taxon>Clausilioidea</taxon>
        <taxon>Clausiliidae</taxon>
        <taxon>Alopiinae</taxon>
        <taxon>Albinaria</taxon>
    </lineage>
</organism>
<name>ATP8_ALBTU</name>
<dbReference type="EMBL" id="X71395">
    <property type="protein sequence ID" value="CAA50518.1"/>
    <property type="molecule type" value="Genomic_DNA"/>
</dbReference>
<dbReference type="PIR" id="S33146">
    <property type="entry name" value="S33146"/>
</dbReference>
<dbReference type="SMR" id="Q08076"/>
<dbReference type="GO" id="GO:0031966">
    <property type="term" value="C:mitochondrial membrane"/>
    <property type="evidence" value="ECO:0007669"/>
    <property type="project" value="UniProtKB-SubCell"/>
</dbReference>
<dbReference type="GO" id="GO:0045259">
    <property type="term" value="C:proton-transporting ATP synthase complex"/>
    <property type="evidence" value="ECO:0007669"/>
    <property type="project" value="UniProtKB-KW"/>
</dbReference>
<dbReference type="GO" id="GO:0006754">
    <property type="term" value="P:ATP biosynthetic process"/>
    <property type="evidence" value="ECO:0007669"/>
    <property type="project" value="UniProtKB-KW"/>
</dbReference>
<dbReference type="GO" id="GO:1902600">
    <property type="term" value="P:proton transmembrane transport"/>
    <property type="evidence" value="ECO:0007669"/>
    <property type="project" value="UniProtKB-KW"/>
</dbReference>
<reference key="1">
    <citation type="journal article" date="1994" name="J. Mol. Evol.">
        <title>Novel features of metazoan mtDNA revealed from sequence analysis of three mitochondrial DNA segments of the land snail Albinaria turrita (Gastropoda: Clausiliidae).</title>
        <authorList>
            <person name="Lecanidou R."/>
            <person name="Douris V."/>
            <person name="Rodakis G.C."/>
        </authorList>
    </citation>
    <scope>NUCLEOTIDE SEQUENCE [GENOMIC DNA]</scope>
</reference>
<keyword id="KW-0066">ATP synthesis</keyword>
<keyword id="KW-0138">CF(0)</keyword>
<keyword id="KW-0375">Hydrogen ion transport</keyword>
<keyword id="KW-0406">Ion transport</keyword>
<keyword id="KW-0472">Membrane</keyword>
<keyword id="KW-0496">Mitochondrion</keyword>
<keyword id="KW-0812">Transmembrane</keyword>
<keyword id="KW-1133">Transmembrane helix</keyword>
<keyword id="KW-0813">Transport</keyword>
<feature type="chain" id="PRO_0000195479" description="ATP synthase protein 8">
    <location>
        <begin position="1"/>
        <end position="52"/>
    </location>
</feature>
<feature type="transmembrane region" description="Helical" evidence="2">
    <location>
        <begin position="6"/>
        <end position="26"/>
    </location>
</feature>
<sequence>MPQLSPINGFVILCSISLMLLTLLINGHFMLKPISSLTTPKLKMAYIKKLYF</sequence>
<proteinExistence type="inferred from homology"/>
<gene>
    <name type="primary">MT-ATP8</name>
    <name type="synonym">ATP8</name>
    <name type="synonym">ATPASE8</name>
    <name type="synonym">MTATP8</name>
</gene>
<comment type="function">
    <text evidence="1">Mitochondrial membrane ATP synthase (F(1)F(0) ATP synthase or Complex V) produces ATP from ADP in the presence of a proton gradient across the membrane which is generated by electron transport complexes of the respiratory chain. F-type ATPases consist of two structural domains, F(1) - containing the extramembraneous catalytic core and F(0) - containing the membrane proton channel, linked together by a central stalk and a peripheral stalk. During catalysis, ATP synthesis in the catalytic domain of F(1) is coupled via a rotary mechanism of the central stalk subunits to proton translocation. Part of the complex F(0) domain. Minor subunit located with subunit a in the membrane (By similarity).</text>
</comment>
<comment type="subunit">
    <text evidence="1">F-type ATPases have 2 components, CF(1) - the catalytic core - and CF(0) - the membrane proton channel.</text>
</comment>
<comment type="subcellular location">
    <subcellularLocation>
        <location>Mitochondrion membrane</location>
        <topology>Single-pass membrane protein</topology>
    </subcellularLocation>
</comment>
<comment type="similarity">
    <text evidence="3">Belongs to the ATPase protein 8 family.</text>
</comment>
<evidence type="ECO:0000250" key="1"/>
<evidence type="ECO:0000255" key="2"/>
<evidence type="ECO:0000305" key="3"/>
<protein>
    <recommendedName>
        <fullName>ATP synthase protein 8</fullName>
    </recommendedName>
    <alternativeName>
        <fullName>A6L</fullName>
    </alternativeName>
    <alternativeName>
        <fullName>F-ATPase subunit 8</fullName>
    </alternativeName>
</protein>
<geneLocation type="mitochondrion"/>
<accession>Q08076</accession>